<protein>
    <recommendedName>
        <fullName>Transcription factor SPT20 homolog</fullName>
    </recommendedName>
    <alternativeName>
        <fullName>p38-interacting protein</fullName>
        <shortName>p38IP</shortName>
    </alternativeName>
</protein>
<keyword id="KW-0002">3D-structure</keyword>
<keyword id="KW-0025">Alternative splicing</keyword>
<keyword id="KW-0072">Autophagy</keyword>
<keyword id="KW-0217">Developmental protein</keyword>
<keyword id="KW-0306">Gastrulation</keyword>
<keyword id="KW-0539">Nucleus</keyword>
<keyword id="KW-0597">Phosphoprotein</keyword>
<keyword id="KW-1267">Proteomics identification</keyword>
<keyword id="KW-1185">Reference proteome</keyword>
<proteinExistence type="evidence at protein level"/>
<sequence length="779" mass="85789">MQQALELALDRAEYVIESARQRPPKRKYLSSGRKSVFQKLYDLYIEECEKEPEVKKLRRNVNLLEKLVMQETLSCLVVNLYPGNEGYSLMLRGKNGSDSETIRLPYEEGELLEYLDAEELPPILVDLLEKSQVNIFHCGCVIAEIRDYRQSSNMKSPGYQSRHILLRPTMQTLICDVHSITSDNHKWTQEDKLLLESQLILATAEPLCLDPSIAVTCTANRLLYNKQKMNTRPMKRCFKRYSRSSLNRQQDLSHCPPPPQLRLLDFLQKRKERKAGQHYDLKISKAGNCVDMWKRSPCNLAIPSEVDVEKYAKVEKSIKSDDSQPTVWPAHDVKDDYVFECEAGTQYQKTKLTILQSLGDPLYYGKIQPCKADEESDSQMSPSHSSTDDHSNWFIIGSKTDAERVVNQYQELVQNEAKCPVKMSHSSSGSASLSQVSPGKETDQTETVSVQSSVLGKGVKHRPPPIKLPSSSGNSSSGNYFTPQQTSSFLKSPTPPPSSKPSSIPRKSSVDLNQVSMLSPAALSPASSSQRTTATQVMANSAGLNFINVVGSVCGAQALMSGSNPMLGCNTGAITPAGINLSGLLPSGGLLPNALPSAMQAASQAGVPFGLKNTSSLRPLNLLQLPGGSLIFNTLQQQQQQLSQFTPQQPQQPTTCSPQQPGEQGSEQGSTSQEQALSAQQAAVINLTGVGSFMQSQAAVLSQLGSAENRPEQSLPQQRFQLSSAFQQQQQQIQQLRFLQHQMAMAAAAAQTAQLHHHRHTGSQSKSKMKRGTPTTPKF</sequence>
<reference key="1">
    <citation type="journal article" date="2001" name="Prostate">
        <title>Identification of a novel gene on chromosome 13 between BRCA2 and Rb1.</title>
        <authorList>
            <person name="Schmidt U."/>
            <person name="Fiedler U."/>
            <person name="Pilarsky C.P."/>
            <person name="Ehlers W."/>
            <person name="Fuessel S."/>
            <person name="Haase M."/>
            <person name="Faller G."/>
            <person name="Sauter G."/>
            <person name="Wirth M.P."/>
        </authorList>
    </citation>
    <scope>NUCLEOTIDE SEQUENCE [MRNA] (ISOFORM 2)</scope>
    <scope>TISSUE SPECIFICITY</scope>
    <source>
        <tissue>Prostate</tissue>
        <tissue>Testis</tissue>
    </source>
</reference>
<reference key="2">
    <citation type="journal article" date="2006" name="Cell">
        <title>p38 and a p38-interacting protein are critical for downregulation of E-cadherin during mouse gastrulation.</title>
        <authorList>
            <person name="Zohn I.E."/>
            <person name="Li Y."/>
            <person name="Skolnik E.Y."/>
            <person name="Anderson K.V."/>
            <person name="Han J."/>
            <person name="Niswander L."/>
        </authorList>
    </citation>
    <scope>NUCLEOTIDE SEQUENCE [MRNA] (ISOFORM 2)</scope>
    <scope>INTERACTION WITH MAPK14</scope>
</reference>
<reference key="3">
    <citation type="journal article" date="2004" name="Nat. Genet.">
        <title>Complete sequencing and characterization of 21,243 full-length human cDNAs.</title>
        <authorList>
            <person name="Ota T."/>
            <person name="Suzuki Y."/>
            <person name="Nishikawa T."/>
            <person name="Otsuki T."/>
            <person name="Sugiyama T."/>
            <person name="Irie R."/>
            <person name="Wakamatsu A."/>
            <person name="Hayashi K."/>
            <person name="Sato H."/>
            <person name="Nagai K."/>
            <person name="Kimura K."/>
            <person name="Makita H."/>
            <person name="Sekine M."/>
            <person name="Obayashi M."/>
            <person name="Nishi T."/>
            <person name="Shibahara T."/>
            <person name="Tanaka T."/>
            <person name="Ishii S."/>
            <person name="Yamamoto J."/>
            <person name="Saito K."/>
            <person name="Kawai Y."/>
            <person name="Isono Y."/>
            <person name="Nakamura Y."/>
            <person name="Nagahari K."/>
            <person name="Murakami K."/>
            <person name="Yasuda T."/>
            <person name="Iwayanagi T."/>
            <person name="Wagatsuma M."/>
            <person name="Shiratori A."/>
            <person name="Sudo H."/>
            <person name="Hosoiri T."/>
            <person name="Kaku Y."/>
            <person name="Kodaira H."/>
            <person name="Kondo H."/>
            <person name="Sugawara M."/>
            <person name="Takahashi M."/>
            <person name="Kanda K."/>
            <person name="Yokoi T."/>
            <person name="Furuya T."/>
            <person name="Kikkawa E."/>
            <person name="Omura Y."/>
            <person name="Abe K."/>
            <person name="Kamihara K."/>
            <person name="Katsuta N."/>
            <person name="Sato K."/>
            <person name="Tanikawa M."/>
            <person name="Yamazaki M."/>
            <person name="Ninomiya K."/>
            <person name="Ishibashi T."/>
            <person name="Yamashita H."/>
            <person name="Murakawa K."/>
            <person name="Fujimori K."/>
            <person name="Tanai H."/>
            <person name="Kimata M."/>
            <person name="Watanabe M."/>
            <person name="Hiraoka S."/>
            <person name="Chiba Y."/>
            <person name="Ishida S."/>
            <person name="Ono Y."/>
            <person name="Takiguchi S."/>
            <person name="Watanabe S."/>
            <person name="Yosida M."/>
            <person name="Hotuta T."/>
            <person name="Kusano J."/>
            <person name="Kanehori K."/>
            <person name="Takahashi-Fujii A."/>
            <person name="Hara H."/>
            <person name="Tanase T.-O."/>
            <person name="Nomura Y."/>
            <person name="Togiya S."/>
            <person name="Komai F."/>
            <person name="Hara R."/>
            <person name="Takeuchi K."/>
            <person name="Arita M."/>
            <person name="Imose N."/>
            <person name="Musashino K."/>
            <person name="Yuuki H."/>
            <person name="Oshima A."/>
            <person name="Sasaki N."/>
            <person name="Aotsuka S."/>
            <person name="Yoshikawa Y."/>
            <person name="Matsunawa H."/>
            <person name="Ichihara T."/>
            <person name="Shiohata N."/>
            <person name="Sano S."/>
            <person name="Moriya S."/>
            <person name="Momiyama H."/>
            <person name="Satoh N."/>
            <person name="Takami S."/>
            <person name="Terashima Y."/>
            <person name="Suzuki O."/>
            <person name="Nakagawa S."/>
            <person name="Senoh A."/>
            <person name="Mizoguchi H."/>
            <person name="Goto Y."/>
            <person name="Shimizu F."/>
            <person name="Wakebe H."/>
            <person name="Hishigaki H."/>
            <person name="Watanabe T."/>
            <person name="Sugiyama A."/>
            <person name="Takemoto M."/>
            <person name="Kawakami B."/>
            <person name="Yamazaki M."/>
            <person name="Watanabe K."/>
            <person name="Kumagai A."/>
            <person name="Itakura S."/>
            <person name="Fukuzumi Y."/>
            <person name="Fujimori Y."/>
            <person name="Komiyama M."/>
            <person name="Tashiro H."/>
            <person name="Tanigami A."/>
            <person name="Fujiwara T."/>
            <person name="Ono T."/>
            <person name="Yamada K."/>
            <person name="Fujii Y."/>
            <person name="Ozaki K."/>
            <person name="Hirao M."/>
            <person name="Ohmori Y."/>
            <person name="Kawabata A."/>
            <person name="Hikiji T."/>
            <person name="Kobatake N."/>
            <person name="Inagaki H."/>
            <person name="Ikema Y."/>
            <person name="Okamoto S."/>
            <person name="Okitani R."/>
            <person name="Kawakami T."/>
            <person name="Noguchi S."/>
            <person name="Itoh T."/>
            <person name="Shigeta K."/>
            <person name="Senba T."/>
            <person name="Matsumura K."/>
            <person name="Nakajima Y."/>
            <person name="Mizuno T."/>
            <person name="Morinaga M."/>
            <person name="Sasaki M."/>
            <person name="Togashi T."/>
            <person name="Oyama M."/>
            <person name="Hata H."/>
            <person name="Watanabe M."/>
            <person name="Komatsu T."/>
            <person name="Mizushima-Sugano J."/>
            <person name="Satoh T."/>
            <person name="Shirai Y."/>
            <person name="Takahashi Y."/>
            <person name="Nakagawa K."/>
            <person name="Okumura K."/>
            <person name="Nagase T."/>
            <person name="Nomura N."/>
            <person name="Kikuchi H."/>
            <person name="Masuho Y."/>
            <person name="Yamashita R."/>
            <person name="Nakai K."/>
            <person name="Yada T."/>
            <person name="Nakamura Y."/>
            <person name="Ohara O."/>
            <person name="Isogai T."/>
            <person name="Sugano S."/>
        </authorList>
    </citation>
    <scope>NUCLEOTIDE SEQUENCE [LARGE SCALE MRNA] (ISOFORM 3)</scope>
    <source>
        <tissue>Kidney</tissue>
    </source>
</reference>
<reference key="4">
    <citation type="journal article" date="2004" name="Nature">
        <title>The DNA sequence and analysis of human chromosome 13.</title>
        <authorList>
            <person name="Dunham A."/>
            <person name="Matthews L.H."/>
            <person name="Burton J."/>
            <person name="Ashurst J.L."/>
            <person name="Howe K.L."/>
            <person name="Ashcroft K.J."/>
            <person name="Beare D.M."/>
            <person name="Burford D.C."/>
            <person name="Hunt S.E."/>
            <person name="Griffiths-Jones S."/>
            <person name="Jones M.C."/>
            <person name="Keenan S.J."/>
            <person name="Oliver K."/>
            <person name="Scott C.E."/>
            <person name="Ainscough R."/>
            <person name="Almeida J.P."/>
            <person name="Ambrose K.D."/>
            <person name="Andrews D.T."/>
            <person name="Ashwell R.I.S."/>
            <person name="Babbage A.K."/>
            <person name="Bagguley C.L."/>
            <person name="Bailey J."/>
            <person name="Bannerjee R."/>
            <person name="Barlow K.F."/>
            <person name="Bates K."/>
            <person name="Beasley H."/>
            <person name="Bird C.P."/>
            <person name="Bray-Allen S."/>
            <person name="Brown A.J."/>
            <person name="Brown J.Y."/>
            <person name="Burrill W."/>
            <person name="Carder C."/>
            <person name="Carter N.P."/>
            <person name="Chapman J.C."/>
            <person name="Clamp M.E."/>
            <person name="Clark S.Y."/>
            <person name="Clarke G."/>
            <person name="Clee C.M."/>
            <person name="Clegg S.C."/>
            <person name="Cobley V."/>
            <person name="Collins J.E."/>
            <person name="Corby N."/>
            <person name="Coville G.J."/>
            <person name="Deloukas P."/>
            <person name="Dhami P."/>
            <person name="Dunham I."/>
            <person name="Dunn M."/>
            <person name="Earthrowl M.E."/>
            <person name="Ellington A.G."/>
            <person name="Faulkner L."/>
            <person name="Frankish A.G."/>
            <person name="Frankland J."/>
            <person name="French L."/>
            <person name="Garner P."/>
            <person name="Garnett J."/>
            <person name="Gilbert J.G.R."/>
            <person name="Gilson C.J."/>
            <person name="Ghori J."/>
            <person name="Grafham D.V."/>
            <person name="Gribble S.M."/>
            <person name="Griffiths C."/>
            <person name="Hall R.E."/>
            <person name="Hammond S."/>
            <person name="Harley J.L."/>
            <person name="Hart E.A."/>
            <person name="Heath P.D."/>
            <person name="Howden P.J."/>
            <person name="Huckle E.J."/>
            <person name="Hunt P.J."/>
            <person name="Hunt A.R."/>
            <person name="Johnson C."/>
            <person name="Johnson D."/>
            <person name="Kay M."/>
            <person name="Kimberley A.M."/>
            <person name="King A."/>
            <person name="Laird G.K."/>
            <person name="Langford C.J."/>
            <person name="Lawlor S."/>
            <person name="Leongamornlert D.A."/>
            <person name="Lloyd D.M."/>
            <person name="Lloyd C."/>
            <person name="Loveland J.E."/>
            <person name="Lovell J."/>
            <person name="Martin S."/>
            <person name="Mashreghi-Mohammadi M."/>
            <person name="McLaren S.J."/>
            <person name="McMurray A."/>
            <person name="Milne S."/>
            <person name="Moore M.J.F."/>
            <person name="Nickerson T."/>
            <person name="Palmer S.A."/>
            <person name="Pearce A.V."/>
            <person name="Peck A.I."/>
            <person name="Pelan S."/>
            <person name="Phillimore B."/>
            <person name="Porter K.M."/>
            <person name="Rice C.M."/>
            <person name="Searle S."/>
            <person name="Sehra H.K."/>
            <person name="Shownkeen R."/>
            <person name="Skuce C.D."/>
            <person name="Smith M."/>
            <person name="Steward C.A."/>
            <person name="Sycamore N."/>
            <person name="Tester J."/>
            <person name="Thomas D.W."/>
            <person name="Tracey A."/>
            <person name="Tromans A."/>
            <person name="Tubby B."/>
            <person name="Wall M."/>
            <person name="Wallis J.M."/>
            <person name="West A.P."/>
            <person name="Whitehead S.L."/>
            <person name="Willey D.L."/>
            <person name="Wilming L."/>
            <person name="Wray P.W."/>
            <person name="Wright M.W."/>
            <person name="Young L."/>
            <person name="Coulson A."/>
            <person name="Durbin R.M."/>
            <person name="Hubbard T."/>
            <person name="Sulston J.E."/>
            <person name="Beck S."/>
            <person name="Bentley D.R."/>
            <person name="Rogers J."/>
            <person name="Ross M.T."/>
        </authorList>
    </citation>
    <scope>NUCLEOTIDE SEQUENCE [LARGE SCALE GENOMIC DNA]</scope>
</reference>
<reference key="5">
    <citation type="journal article" date="2004" name="Genome Res.">
        <title>The status, quality, and expansion of the NIH full-length cDNA project: the Mammalian Gene Collection (MGC).</title>
        <authorList>
            <consortium name="The MGC Project Team"/>
        </authorList>
    </citation>
    <scope>NUCLEOTIDE SEQUENCE [LARGE SCALE MRNA] (ISOFORM 1)</scope>
    <source>
        <tissue>Testis</tissue>
    </source>
</reference>
<reference key="6">
    <citation type="journal article" date="2004" name="Proc. Natl. Acad. Sci. U.S.A.">
        <title>Large-scale cDNA transfection screening for genes related to cancer development and progression.</title>
        <authorList>
            <person name="Wan D."/>
            <person name="Gong Y."/>
            <person name="Qin W."/>
            <person name="Zhang P."/>
            <person name="Li J."/>
            <person name="Wei L."/>
            <person name="Zhou X."/>
            <person name="Li H."/>
            <person name="Qiu X."/>
            <person name="Zhong F."/>
            <person name="He L."/>
            <person name="Yu J."/>
            <person name="Yao G."/>
            <person name="Jiang H."/>
            <person name="Qian L."/>
            <person name="Yu Y."/>
            <person name="Shu H."/>
            <person name="Chen X."/>
            <person name="Xu H."/>
            <person name="Guo M."/>
            <person name="Pan Z."/>
            <person name="Chen Y."/>
            <person name="Ge C."/>
            <person name="Yang S."/>
            <person name="Gu J."/>
        </authorList>
    </citation>
    <scope>NUCLEOTIDE SEQUENCE [LARGE SCALE MRNA] OF 445-779</scope>
    <scope>VARIANT MET-773</scope>
</reference>
<reference key="7">
    <citation type="journal article" date="2009" name="Sci. Signal.">
        <title>Quantitative phosphoproteomic analysis of T cell receptor signaling reveals system-wide modulation of protein-protein interactions.</title>
        <authorList>
            <person name="Mayya V."/>
            <person name="Lundgren D.H."/>
            <person name="Hwang S.-I."/>
            <person name="Rezaul K."/>
            <person name="Wu L."/>
            <person name="Eng J.K."/>
            <person name="Rodionov V."/>
            <person name="Han D.K."/>
        </authorList>
    </citation>
    <scope>PHOSPHORYLATION [LARGE SCALE ANALYSIS] AT SER-519</scope>
    <scope>IDENTIFICATION BY MASS SPECTROMETRY [LARGE SCALE ANALYSIS]</scope>
    <source>
        <tissue>Leukemic T-cell</tissue>
    </source>
</reference>
<reference key="8">
    <citation type="journal article" date="2010" name="EMBO J.">
        <title>Coordinated regulation of autophagy by p38alpha MAPK through mAtg9 and p38IP.</title>
        <authorList>
            <person name="Webber J.L."/>
            <person name="Tooze S.A."/>
        </authorList>
    </citation>
    <scope>FUNCTION</scope>
    <scope>INTERACTION WITH ATG9A</scope>
    <scope>SUBCELLULAR LOCATION</scope>
</reference>
<reference key="9">
    <citation type="journal article" date="2012" name="Proc. Natl. Acad. Sci. U.S.A.">
        <title>N-terminal acetylome analyses and functional insights of the N-terminal acetyltransferase NatB.</title>
        <authorList>
            <person name="Van Damme P."/>
            <person name="Lasa M."/>
            <person name="Polevoda B."/>
            <person name="Gazquez C."/>
            <person name="Elosegui-Artola A."/>
            <person name="Kim D.S."/>
            <person name="De Juan-Pardo E."/>
            <person name="Demeyer K."/>
            <person name="Hole K."/>
            <person name="Larrea E."/>
            <person name="Timmerman E."/>
            <person name="Prieto J."/>
            <person name="Arnesen T."/>
            <person name="Sherman F."/>
            <person name="Gevaert K."/>
            <person name="Aldabe R."/>
        </authorList>
    </citation>
    <scope>IDENTIFICATION BY MASS SPECTROMETRY [LARGE SCALE ANALYSIS]</scope>
</reference>
<reference key="10">
    <citation type="journal article" date="2013" name="J. Proteome Res.">
        <title>Toward a comprehensive characterization of a human cancer cell phosphoproteome.</title>
        <authorList>
            <person name="Zhou H."/>
            <person name="Di Palma S."/>
            <person name="Preisinger C."/>
            <person name="Peng M."/>
            <person name="Polat A.N."/>
            <person name="Heck A.J."/>
            <person name="Mohammed S."/>
        </authorList>
    </citation>
    <scope>PHOSPHORYLATION [LARGE SCALE ANALYSIS] AT THR-494</scope>
    <scope>IDENTIFICATION BY MASS SPECTROMETRY [LARGE SCALE ANALYSIS]</scope>
    <source>
        <tissue>Cervix carcinoma</tissue>
        <tissue>Erythroleukemia</tissue>
    </source>
</reference>
<evidence type="ECO:0000250" key="1"/>
<evidence type="ECO:0000250" key="2">
    <source>
        <dbReference type="UniProtKB" id="Q7TT00"/>
    </source>
</evidence>
<evidence type="ECO:0000256" key="3">
    <source>
        <dbReference type="SAM" id="MobiDB-lite"/>
    </source>
</evidence>
<evidence type="ECO:0000269" key="4">
    <source>
    </source>
</evidence>
<evidence type="ECO:0000269" key="5">
    <source>
    </source>
</evidence>
<evidence type="ECO:0000269" key="6">
    <source>
    </source>
</evidence>
<evidence type="ECO:0000269" key="7">
    <source>
    </source>
</evidence>
<evidence type="ECO:0000303" key="8">
    <source>
    </source>
</evidence>
<evidence type="ECO:0000303" key="9">
    <source>
    </source>
</evidence>
<evidence type="ECO:0000303" key="10">
    <source>
    </source>
</evidence>
<evidence type="ECO:0000305" key="11"/>
<evidence type="ECO:0007744" key="12">
    <source>
    </source>
</evidence>
<evidence type="ECO:0007744" key="13">
    <source>
    </source>
</evidence>
<evidence type="ECO:0007829" key="14">
    <source>
        <dbReference type="PDB" id="7KTR"/>
    </source>
</evidence>
<name>SP20H_HUMAN</name>
<gene>
    <name type="primary">SUPT20H</name>
    <name type="synonym">C13orf19</name>
    <name type="synonym">FAM48A</name>
    <name type="ORF">FP757</name>
</gene>
<accession>Q8NEM7</accession>
<accession>E7ER46</accession>
<accession>Q71RF3</accession>
<accession>Q9Y6A6</accession>
<dbReference type="EMBL" id="AJ130894">
    <property type="protein sequence ID" value="CAB62207.1"/>
    <property type="molecule type" value="mRNA"/>
</dbReference>
<dbReference type="EMBL" id="AF093250">
    <property type="protein sequence ID" value="AAD40550.1"/>
    <property type="molecule type" value="mRNA"/>
</dbReference>
<dbReference type="EMBL" id="AK225376">
    <property type="status" value="NOT_ANNOTATED_CDS"/>
    <property type="molecule type" value="mRNA"/>
</dbReference>
<dbReference type="EMBL" id="AL138706">
    <property type="status" value="NOT_ANNOTATED_CDS"/>
    <property type="molecule type" value="Genomic_DNA"/>
</dbReference>
<dbReference type="EMBL" id="AL391383">
    <property type="status" value="NOT_ANNOTATED_CDS"/>
    <property type="molecule type" value="Genomic_DNA"/>
</dbReference>
<dbReference type="EMBL" id="BC030686">
    <property type="protein sequence ID" value="AAH30686.1"/>
    <property type="molecule type" value="mRNA"/>
</dbReference>
<dbReference type="EMBL" id="AF370384">
    <property type="protein sequence ID" value="AAQ15220.1"/>
    <property type="status" value="ALT_SEQ"/>
    <property type="molecule type" value="mRNA"/>
</dbReference>
<dbReference type="CCDS" id="CCDS31959.1">
    <molecule id="Q8NEM7-1"/>
</dbReference>
<dbReference type="CCDS" id="CCDS61311.1">
    <molecule id="Q8NEM7-3"/>
</dbReference>
<dbReference type="CCDS" id="CCDS9362.1">
    <molecule id="Q8NEM7-2"/>
</dbReference>
<dbReference type="RefSeq" id="NP_001014308.2">
    <molecule id="Q8NEM7-1"/>
    <property type="nucleotide sequence ID" value="NM_001014286.3"/>
</dbReference>
<dbReference type="RefSeq" id="NP_001265409.1">
    <molecule id="Q8NEM7-3"/>
    <property type="nucleotide sequence ID" value="NM_001278480.2"/>
</dbReference>
<dbReference type="RefSeq" id="NP_001265410.1">
    <molecule id="Q8NEM7-2"/>
    <property type="nucleotide sequence ID" value="NM_001278481.2"/>
</dbReference>
<dbReference type="RefSeq" id="NP_001265411.1">
    <molecule id="Q8NEM7-2"/>
    <property type="nucleotide sequence ID" value="NM_001278482.2"/>
</dbReference>
<dbReference type="RefSeq" id="NP_060039.1">
    <molecule id="Q8NEM7-2"/>
    <property type="nucleotide sequence ID" value="NM_017569.4"/>
</dbReference>
<dbReference type="RefSeq" id="XP_047286405.1">
    <molecule id="Q8NEM7-3"/>
    <property type="nucleotide sequence ID" value="XM_047430449.1"/>
</dbReference>
<dbReference type="RefSeq" id="XP_047286413.1">
    <molecule id="Q8NEM7-1"/>
    <property type="nucleotide sequence ID" value="XM_047430457.1"/>
</dbReference>
<dbReference type="RefSeq" id="XP_054230667.1">
    <molecule id="Q8NEM7-3"/>
    <property type="nucleotide sequence ID" value="XM_054374692.1"/>
</dbReference>
<dbReference type="RefSeq" id="XP_054230676.1">
    <molecule id="Q8NEM7-1"/>
    <property type="nucleotide sequence ID" value="XM_054374701.1"/>
</dbReference>
<dbReference type="PDB" id="7KTR">
    <property type="method" value="EM"/>
    <property type="resolution" value="2.93 A"/>
    <property type="chains" value="C=1-728"/>
</dbReference>
<dbReference type="PDB" id="7KTS">
    <property type="method" value="EM"/>
    <property type="resolution" value="19.09 A"/>
    <property type="chains" value="C=1-728"/>
</dbReference>
<dbReference type="PDB" id="8H7G">
    <property type="method" value="EM"/>
    <property type="resolution" value="3.70 A"/>
    <property type="chains" value="D=1-779"/>
</dbReference>
<dbReference type="PDBsum" id="7KTR"/>
<dbReference type="PDBsum" id="7KTS"/>
<dbReference type="PDBsum" id="8H7G"/>
<dbReference type="EMDB" id="EMD-23027"/>
<dbReference type="EMDB" id="EMD-23028"/>
<dbReference type="EMDB" id="EMD-34520"/>
<dbReference type="SMR" id="Q8NEM7"/>
<dbReference type="BioGRID" id="120729">
    <property type="interactions" value="89"/>
</dbReference>
<dbReference type="ComplexPortal" id="CPX-6802">
    <property type="entry name" value="SAGA complex, KAT2B variant"/>
</dbReference>
<dbReference type="ComplexPortal" id="CPX-900">
    <property type="entry name" value="SAGA complex, KAT2A variant"/>
</dbReference>
<dbReference type="CORUM" id="Q8NEM7"/>
<dbReference type="FunCoup" id="Q8NEM7">
    <property type="interactions" value="1011"/>
</dbReference>
<dbReference type="IntAct" id="Q8NEM7">
    <property type="interactions" value="61"/>
</dbReference>
<dbReference type="MINT" id="Q8NEM7"/>
<dbReference type="STRING" id="9606.ENSP00000417510"/>
<dbReference type="GlyCosmos" id="Q8NEM7">
    <property type="glycosylation" value="6 sites, 2 glycans"/>
</dbReference>
<dbReference type="GlyGen" id="Q8NEM7">
    <property type="glycosylation" value="7 sites, 2 O-linked glycans (6 sites)"/>
</dbReference>
<dbReference type="iPTMnet" id="Q8NEM7"/>
<dbReference type="PhosphoSitePlus" id="Q8NEM7"/>
<dbReference type="BioMuta" id="SUPT20H"/>
<dbReference type="DMDM" id="334302791"/>
<dbReference type="jPOST" id="Q8NEM7"/>
<dbReference type="MassIVE" id="Q8NEM7"/>
<dbReference type="PeptideAtlas" id="Q8NEM7"/>
<dbReference type="ProteomicsDB" id="17715"/>
<dbReference type="ProteomicsDB" id="73182">
    <molecule id="Q8NEM7-1"/>
</dbReference>
<dbReference type="ProteomicsDB" id="73183">
    <molecule id="Q8NEM7-2"/>
</dbReference>
<dbReference type="Pumba" id="Q8NEM7"/>
<dbReference type="Antibodypedia" id="49228">
    <property type="antibodies" value="83 antibodies from 20 providers"/>
</dbReference>
<dbReference type="DNASU" id="55578"/>
<dbReference type="Ensembl" id="ENST00000350612.11">
    <molecule id="Q8NEM7-1"/>
    <property type="protein sequence ID" value="ENSP00000218894.10"/>
    <property type="gene ID" value="ENSG00000102710.21"/>
</dbReference>
<dbReference type="Ensembl" id="ENST00000356185.7">
    <molecule id="Q8NEM7-2"/>
    <property type="protein sequence ID" value="ENSP00000348512.3"/>
    <property type="gene ID" value="ENSG00000102710.21"/>
</dbReference>
<dbReference type="Ensembl" id="ENST00000360252.8">
    <molecule id="Q8NEM7-2"/>
    <property type="protein sequence ID" value="ENSP00000353388.4"/>
    <property type="gene ID" value="ENSG00000102710.21"/>
</dbReference>
<dbReference type="Ensembl" id="ENST00000464744.5">
    <molecule id="Q8NEM7-2"/>
    <property type="protein sequence ID" value="ENSP00000419754.1"/>
    <property type="gene ID" value="ENSG00000102710.21"/>
</dbReference>
<dbReference type="Ensembl" id="ENST00000475892.5">
    <molecule id="Q8NEM7-3"/>
    <property type="protein sequence ID" value="ENSP00000417510.1"/>
    <property type="gene ID" value="ENSG00000102710.21"/>
</dbReference>
<dbReference type="GeneID" id="55578"/>
<dbReference type="KEGG" id="hsa:55578"/>
<dbReference type="MANE-Select" id="ENST00000350612.11">
    <property type="protein sequence ID" value="ENSP00000218894.10"/>
    <property type="RefSeq nucleotide sequence ID" value="NM_001014286.3"/>
    <property type="RefSeq protein sequence ID" value="NP_001014308.2"/>
</dbReference>
<dbReference type="UCSC" id="uc001uwg.4">
    <molecule id="Q8NEM7-1"/>
    <property type="organism name" value="human"/>
</dbReference>
<dbReference type="AGR" id="HGNC:20596"/>
<dbReference type="CTD" id="55578"/>
<dbReference type="DisGeNET" id="55578"/>
<dbReference type="GeneCards" id="SUPT20H"/>
<dbReference type="HGNC" id="HGNC:20596">
    <property type="gene designation" value="SUPT20H"/>
</dbReference>
<dbReference type="HPA" id="ENSG00000102710">
    <property type="expression patterns" value="Tissue enhanced (testis)"/>
</dbReference>
<dbReference type="MalaCards" id="SUPT20H"/>
<dbReference type="MIM" id="613417">
    <property type="type" value="gene"/>
</dbReference>
<dbReference type="neXtProt" id="NX_Q8NEM7"/>
<dbReference type="OpenTargets" id="ENSG00000102710"/>
<dbReference type="PharmGKB" id="PA134985241"/>
<dbReference type="VEuPathDB" id="HostDB:ENSG00000102710"/>
<dbReference type="GeneTree" id="ENSGT00390000013549"/>
<dbReference type="HOGENOM" id="CLU_020200_1_0_1"/>
<dbReference type="InParanoid" id="Q8NEM7"/>
<dbReference type="OMA" id="XTTATQV"/>
<dbReference type="OrthoDB" id="1932706at2759"/>
<dbReference type="PAN-GO" id="Q8NEM7">
    <property type="GO annotations" value="3 GO annotations based on evolutionary models"/>
</dbReference>
<dbReference type="TreeFam" id="TF329155"/>
<dbReference type="PathwayCommons" id="Q8NEM7"/>
<dbReference type="Reactome" id="R-HSA-3214847">
    <property type="pathway name" value="HATs acetylate histones"/>
</dbReference>
<dbReference type="SignaLink" id="Q8NEM7"/>
<dbReference type="SIGNOR" id="Q8NEM7"/>
<dbReference type="BioGRID-ORCS" id="55578">
    <property type="hits" value="133 hits in 1173 CRISPR screens"/>
</dbReference>
<dbReference type="ChiTaRS" id="SUPT20H">
    <property type="organism name" value="human"/>
</dbReference>
<dbReference type="GeneWiki" id="FAM48A"/>
<dbReference type="GenomeRNAi" id="55578"/>
<dbReference type="Pharos" id="Q8NEM7">
    <property type="development level" value="Tbio"/>
</dbReference>
<dbReference type="PRO" id="PR:Q8NEM7"/>
<dbReference type="Proteomes" id="UP000005640">
    <property type="component" value="Chromosome 13"/>
</dbReference>
<dbReference type="RNAct" id="Q8NEM7">
    <property type="molecule type" value="protein"/>
</dbReference>
<dbReference type="Bgee" id="ENSG00000102710">
    <property type="expression patterns" value="Expressed in left testis and 204 other cell types or tissues"/>
</dbReference>
<dbReference type="ExpressionAtlas" id="Q8NEM7">
    <property type="expression patterns" value="baseline and differential"/>
</dbReference>
<dbReference type="GO" id="GO:0005634">
    <property type="term" value="C:nucleus"/>
    <property type="evidence" value="ECO:0007669"/>
    <property type="project" value="UniProtKB-SubCell"/>
</dbReference>
<dbReference type="GO" id="GO:0000124">
    <property type="term" value="C:SAGA complex"/>
    <property type="evidence" value="ECO:0000318"/>
    <property type="project" value="GO_Central"/>
</dbReference>
<dbReference type="GO" id="GO:0070461">
    <property type="term" value="C:SAGA-type complex"/>
    <property type="evidence" value="ECO:0000314"/>
    <property type="project" value="BHF-UCL"/>
</dbReference>
<dbReference type="GO" id="GO:0003712">
    <property type="term" value="F:transcription coregulator activity"/>
    <property type="evidence" value="ECO:0000318"/>
    <property type="project" value="GO_Central"/>
</dbReference>
<dbReference type="GO" id="GO:0006914">
    <property type="term" value="P:autophagy"/>
    <property type="evidence" value="ECO:0007669"/>
    <property type="project" value="UniProtKB-KW"/>
</dbReference>
<dbReference type="GO" id="GO:0007369">
    <property type="term" value="P:gastrulation"/>
    <property type="evidence" value="ECO:0007669"/>
    <property type="project" value="UniProtKB-KW"/>
</dbReference>
<dbReference type="GO" id="GO:0045893">
    <property type="term" value="P:positive regulation of DNA-templated transcription"/>
    <property type="evidence" value="ECO:0000303"/>
    <property type="project" value="ComplexPortal"/>
</dbReference>
<dbReference type="GO" id="GO:0006282">
    <property type="term" value="P:regulation of DNA repair"/>
    <property type="evidence" value="ECO:0000303"/>
    <property type="project" value="ComplexPortal"/>
</dbReference>
<dbReference type="GO" id="GO:0043484">
    <property type="term" value="P:regulation of RNA splicing"/>
    <property type="evidence" value="ECO:0000303"/>
    <property type="project" value="ComplexPortal"/>
</dbReference>
<dbReference type="GO" id="GO:0006357">
    <property type="term" value="P:regulation of transcription by RNA polymerase II"/>
    <property type="evidence" value="ECO:0000318"/>
    <property type="project" value="GO_Central"/>
</dbReference>
<dbReference type="InterPro" id="IPR021950">
    <property type="entry name" value="Spt20"/>
</dbReference>
<dbReference type="InterPro" id="IPR046468">
    <property type="entry name" value="Spt20-like_SEP"/>
</dbReference>
<dbReference type="PANTHER" id="PTHR13526">
    <property type="entry name" value="TRANSCRIPTION FACTOR SPT20 HOMOLOG"/>
    <property type="match status" value="1"/>
</dbReference>
<dbReference type="PANTHER" id="PTHR13526:SF18">
    <property type="entry name" value="TRANSCRIPTION FACTOR SPT20 HOMOLOG"/>
    <property type="match status" value="1"/>
</dbReference>
<dbReference type="Pfam" id="PF12090">
    <property type="entry name" value="Spt20_SEP"/>
    <property type="match status" value="1"/>
</dbReference>
<organism>
    <name type="scientific">Homo sapiens</name>
    <name type="common">Human</name>
    <dbReference type="NCBI Taxonomy" id="9606"/>
    <lineage>
        <taxon>Eukaryota</taxon>
        <taxon>Metazoa</taxon>
        <taxon>Chordata</taxon>
        <taxon>Craniata</taxon>
        <taxon>Vertebrata</taxon>
        <taxon>Euteleostomi</taxon>
        <taxon>Mammalia</taxon>
        <taxon>Eutheria</taxon>
        <taxon>Euarchontoglires</taxon>
        <taxon>Primates</taxon>
        <taxon>Haplorrhini</taxon>
        <taxon>Catarrhini</taxon>
        <taxon>Hominidae</taxon>
        <taxon>Homo</taxon>
    </lineage>
</organism>
<comment type="function">
    <text evidence="1 7">Required for MAP kinase p38 (MAPK11, MAPK12, MAPK13 and/or MAPK14) activation during gastrulation. Required for down-regulation of E-cadherin during gastrulation by regulating E-cadherin protein level downstream from NCK-interacting kinase (NIK) and independently of the regulation of transcription by FGF signaling and Snail (By similarity). Required for starvation-induced ATG9A trafficking during autophagy.</text>
</comment>
<comment type="subunit">
    <text evidence="6 7">Interacts with MAPK14. Interacts with ATG9A.</text>
</comment>
<comment type="interaction">
    <interactant intactId="EBI-946984">
        <id>Q8NEM7</id>
    </interactant>
    <interactant intactId="EBI-930964">
        <id>P54253</id>
        <label>ATXN1</label>
    </interactant>
    <organismsDiffer>false</organismsDiffer>
    <experiments>7</experiments>
</comment>
<comment type="interaction">
    <interactant intactId="EBI-946984">
        <id>Q8NEM7</id>
    </interactant>
    <interactant intactId="EBI-73946">
        <id>Q16539</id>
        <label>MAPK14</label>
    </interactant>
    <organismsDiffer>false</organismsDiffer>
    <experiments>5</experiments>
</comment>
<comment type="interaction">
    <interactant intactId="EBI-7568679">
        <id>Q8NEM7-2</id>
    </interactant>
    <interactant intactId="EBI-727146">
        <id>Q7Z3C6</id>
        <label>ATG9A</label>
    </interactant>
    <organismsDiffer>false</organismsDiffer>
    <experiments>8</experiments>
</comment>
<comment type="subcellular location">
    <subcellularLocation>
        <location evidence="7">Nucleus</location>
    </subcellularLocation>
</comment>
<comment type="alternative products">
    <event type="alternative splicing"/>
    <isoform>
        <id>Q8NEM7-1</id>
        <name>1</name>
        <sequence type="displayed"/>
    </isoform>
    <isoform>
        <id>Q8NEM7-2</id>
        <name>2</name>
        <sequence type="described" ref="VSP_014877 VSP_014878 VSP_014879"/>
    </isoform>
    <isoform>
        <id>Q8NEM7-3</id>
        <name>3</name>
        <sequence type="described" ref="VSP_055621 VSP_014878 VSP_014879"/>
    </isoform>
</comment>
<comment type="tissue specificity">
    <text evidence="4">Highly expressed in testis, moderately in brain and pituitary gland. Expressed in several fetal tissues, including lung, brain, thymus and kidney. Expression is down-regulated in malignant prostate tissues.</text>
</comment>
<comment type="similarity">
    <text evidence="11">Belongs to the SPT20 family.</text>
</comment>
<comment type="sequence caution" evidence="11">
    <conflict type="frameshift">
        <sequence resource="EMBL-CDS" id="AAQ15220"/>
    </conflict>
</comment>
<comment type="sequence caution" evidence="11">
    <conflict type="miscellaneous discrepancy">
        <sequence resource="EMBL-CDS" id="AAQ15220"/>
    </conflict>
    <text>Intron retention.</text>
</comment>
<feature type="chain" id="PRO_0000187039" description="Transcription factor SPT20 homolog">
    <location>
        <begin position="1"/>
        <end position="779"/>
    </location>
</feature>
<feature type="region of interest" description="Disordered" evidence="3">
    <location>
        <begin position="373"/>
        <end position="392"/>
    </location>
</feature>
<feature type="region of interest" description="Disordered" evidence="3">
    <location>
        <begin position="420"/>
        <end position="507"/>
    </location>
</feature>
<feature type="region of interest" description="Disordered" evidence="3">
    <location>
        <begin position="641"/>
        <end position="677"/>
    </location>
</feature>
<feature type="region of interest" description="Disordered" evidence="3">
    <location>
        <begin position="755"/>
        <end position="779"/>
    </location>
</feature>
<feature type="compositionally biased region" description="Low complexity" evidence="3">
    <location>
        <begin position="424"/>
        <end position="437"/>
    </location>
</feature>
<feature type="compositionally biased region" description="Polar residues" evidence="3">
    <location>
        <begin position="445"/>
        <end position="454"/>
    </location>
</feature>
<feature type="compositionally biased region" description="Low complexity" evidence="3">
    <location>
        <begin position="470"/>
        <end position="479"/>
    </location>
</feature>
<feature type="compositionally biased region" description="Basic residues" evidence="3">
    <location>
        <begin position="755"/>
        <end position="771"/>
    </location>
</feature>
<feature type="modified residue" description="Phosphoserine" evidence="2">
    <location>
        <position position="296"/>
    </location>
</feature>
<feature type="modified residue" description="Phosphothreonine" evidence="13">
    <location>
        <position position="494"/>
    </location>
</feature>
<feature type="modified residue" description="Phosphoserine" evidence="12">
    <location>
        <position position="519"/>
    </location>
</feature>
<feature type="modified residue" description="Phosphoserine" evidence="2">
    <location>
        <position position="524"/>
    </location>
</feature>
<feature type="splice variant" id="VSP_014877" description="In isoform 2." evidence="8 10">
    <original>K</original>
    <variation>KQ</variation>
    <location>
        <position position="55"/>
    </location>
</feature>
<feature type="splice variant" id="VSP_055621" description="In isoform 3." evidence="9">
    <original>R</original>
    <variation>RSGTPKPSTPTPTPSSTPHPPDAQSSTPSTPSATPTPQDSGFTPQPTLLTQFAQQQRSLSQAMPVTTIPLSTMVTSITPG</variation>
    <location>
        <position position="531"/>
    </location>
</feature>
<feature type="splice variant" id="VSP_014878" description="In isoform 2 and isoform 3." evidence="8 9 10">
    <original>VLSQLGSAENRPEQSLPQQRFQLSSAFQQQQQQ</original>
    <variation>AVAILAASNGYGSSSSTNSSATSSSAYRQPVKK</variation>
    <location>
        <begin position="700"/>
        <end position="732"/>
    </location>
</feature>
<feature type="splice variant" id="VSP_014879" description="In isoform 2 and isoform 3." evidence="8 9 10">
    <location>
        <begin position="733"/>
        <end position="779"/>
    </location>
</feature>
<feature type="sequence variant" id="VAR_055798" description="In dbSNP:rs7324275.">
    <original>M</original>
    <variation>V</variation>
    <location>
        <position position="154"/>
    </location>
</feature>
<feature type="sequence variant" id="VAR_055799" description="In dbSNP:rs9469." evidence="5">
    <original>T</original>
    <variation>M</variation>
    <location>
        <position position="773"/>
    </location>
</feature>
<feature type="sequence conflict" description="In Ref. 5; AAH30686." evidence="11" ref="5">
    <original>A</original>
    <variation>V</variation>
    <location>
        <position position="707"/>
    </location>
</feature>
<feature type="helix" evidence="14">
    <location>
        <begin position="2"/>
        <end position="21"/>
    </location>
</feature>
<feature type="helix" evidence="14">
    <location>
        <begin position="36"/>
        <end position="49"/>
    </location>
</feature>
<feature type="strand" evidence="14">
    <location>
        <begin position="53"/>
        <end position="57"/>
    </location>
</feature>
<feature type="helix" evidence="14">
    <location>
        <begin position="63"/>
        <end position="69"/>
    </location>
</feature>
<feature type="strand" evidence="14">
    <location>
        <begin position="76"/>
        <end position="81"/>
    </location>
</feature>
<feature type="turn" evidence="14">
    <location>
        <begin position="82"/>
        <end position="85"/>
    </location>
</feature>
<feature type="strand" evidence="14">
    <location>
        <begin position="86"/>
        <end position="90"/>
    </location>
</feature>
<feature type="helix" evidence="14">
    <location>
        <begin position="110"/>
        <end position="116"/>
    </location>
</feature>
<feature type="helix" evidence="14">
    <location>
        <begin position="122"/>
        <end position="130"/>
    </location>
</feature>
<feature type="strand" evidence="14">
    <location>
        <begin position="140"/>
        <end position="147"/>
    </location>
</feature>
<feature type="strand" evidence="14">
    <location>
        <begin position="162"/>
        <end position="167"/>
    </location>
</feature>
<feature type="helix" evidence="14">
    <location>
        <begin position="170"/>
        <end position="180"/>
    </location>
</feature>
<feature type="strand" evidence="14">
    <location>
        <begin position="183"/>
        <end position="186"/>
    </location>
</feature>
<feature type="helix" evidence="14">
    <location>
        <begin position="189"/>
        <end position="202"/>
    </location>
</feature>
<feature type="helix" evidence="14">
    <location>
        <begin position="214"/>
        <end position="226"/>
    </location>
</feature>
<feature type="turn" evidence="14">
    <location>
        <begin position="227"/>
        <end position="229"/>
    </location>
</feature>
<feature type="helix" evidence="14">
    <location>
        <begin position="232"/>
        <end position="241"/>
    </location>
</feature>
<feature type="helix" evidence="14">
    <location>
        <begin position="243"/>
        <end position="251"/>
    </location>
</feature>
<feature type="helix" evidence="14">
    <location>
        <begin position="252"/>
        <end position="254"/>
    </location>
</feature>
<feature type="helix" evidence="14">
    <location>
        <begin position="262"/>
        <end position="271"/>
    </location>
</feature>
<feature type="helix" evidence="14">
    <location>
        <begin position="308"/>
        <end position="310"/>
    </location>
</feature>
<feature type="strand" evidence="14">
    <location>
        <begin position="322"/>
        <end position="324"/>
    </location>
</feature>
<feature type="strand" evidence="14">
    <location>
        <begin position="333"/>
        <end position="340"/>
    </location>
</feature>
<feature type="strand" evidence="14">
    <location>
        <begin position="343"/>
        <end position="345"/>
    </location>
</feature>
<feature type="strand" evidence="14">
    <location>
        <begin position="350"/>
        <end position="356"/>
    </location>
</feature>
<feature type="strand" evidence="14">
    <location>
        <begin position="363"/>
        <end position="365"/>
    </location>
</feature>
<feature type="strand" evidence="14">
    <location>
        <begin position="394"/>
        <end position="396"/>
    </location>
</feature>
<feature type="helix" evidence="14">
    <location>
        <begin position="399"/>
        <end position="417"/>
    </location>
</feature>
<feature type="strand" evidence="14">
    <location>
        <begin position="422"/>
        <end position="427"/>
    </location>
</feature>